<organism>
    <name type="scientific">Streptococcus thermophilus (strain CNRZ 1066)</name>
    <dbReference type="NCBI Taxonomy" id="299768"/>
    <lineage>
        <taxon>Bacteria</taxon>
        <taxon>Bacillati</taxon>
        <taxon>Bacillota</taxon>
        <taxon>Bacilli</taxon>
        <taxon>Lactobacillales</taxon>
        <taxon>Streptococcaceae</taxon>
        <taxon>Streptococcus</taxon>
    </lineage>
</organism>
<feature type="chain" id="PRO_0000223447" description="Urease accessory protein UreE">
    <location>
        <begin position="1"/>
        <end position="150"/>
    </location>
</feature>
<reference key="1">
    <citation type="journal article" date="2004" name="Nat. Biotechnol.">
        <title>Complete sequence and comparative genome analysis of the dairy bacterium Streptococcus thermophilus.</title>
        <authorList>
            <person name="Bolotin A."/>
            <person name="Quinquis B."/>
            <person name="Renault P."/>
            <person name="Sorokin A."/>
            <person name="Ehrlich S.D."/>
            <person name="Kulakauskas S."/>
            <person name="Lapidus A."/>
            <person name="Goltsman E."/>
            <person name="Mazur M."/>
            <person name="Pusch G.D."/>
            <person name="Fonstein M."/>
            <person name="Overbeek R."/>
            <person name="Kyprides N."/>
            <person name="Purnelle B."/>
            <person name="Prozzi D."/>
            <person name="Ngui K."/>
            <person name="Masuy D."/>
            <person name="Hancy F."/>
            <person name="Burteau S."/>
            <person name="Boutry M."/>
            <person name="Delcour J."/>
            <person name="Goffeau A."/>
            <person name="Hols P."/>
        </authorList>
    </citation>
    <scope>NUCLEOTIDE SEQUENCE [LARGE SCALE GENOMIC DNA]</scope>
    <source>
        <strain>CNRZ 1066</strain>
    </source>
</reference>
<keyword id="KW-0143">Chaperone</keyword>
<keyword id="KW-0963">Cytoplasm</keyword>
<keyword id="KW-0533">Nickel</keyword>
<keyword id="KW-0996">Nickel insertion</keyword>
<evidence type="ECO:0000255" key="1">
    <source>
        <dbReference type="HAMAP-Rule" id="MF_00822"/>
    </source>
</evidence>
<gene>
    <name evidence="1" type="primary">ureE</name>
    <name type="ordered locus">str0284</name>
</gene>
<name>UREE_STRT1</name>
<comment type="function">
    <text evidence="1">Involved in urease metallocenter assembly. Binds nickel. Probably functions as a nickel donor during metallocenter assembly.</text>
</comment>
<comment type="subcellular location">
    <subcellularLocation>
        <location evidence="1">Cytoplasm</location>
    </subcellularLocation>
</comment>
<comment type="similarity">
    <text evidence="1">Belongs to the UreE family.</text>
</comment>
<proteinExistence type="inferred from homology"/>
<sequence length="150" mass="16956">MIFTKVDALVKDIDVDKYHIETVILSSDDLNKKIIRVKSDHGNEFGIRLDKGQKLQNGSAFFIDDHHVLAIGVESQDLIVISPKDMDEMGITAHILGNTHKPIEVKDAKIYLEVDPVVEQVLTQKEIAYTIEEVVLDKPLRHVNLTAHEH</sequence>
<protein>
    <recommendedName>
        <fullName evidence="1">Urease accessory protein UreE</fullName>
    </recommendedName>
</protein>
<accession>Q5M1G5</accession>
<dbReference type="EMBL" id="CP000024">
    <property type="protein sequence ID" value="AAV61896.1"/>
    <property type="molecule type" value="Genomic_DNA"/>
</dbReference>
<dbReference type="RefSeq" id="WP_002949549.1">
    <property type="nucleotide sequence ID" value="NC_006449.1"/>
</dbReference>
<dbReference type="SMR" id="Q5M1G5"/>
<dbReference type="GeneID" id="93791473"/>
<dbReference type="KEGG" id="stc:str0284"/>
<dbReference type="HOGENOM" id="CLU_093757_3_1_9"/>
<dbReference type="GO" id="GO:0005737">
    <property type="term" value="C:cytoplasm"/>
    <property type="evidence" value="ECO:0007669"/>
    <property type="project" value="UniProtKB-SubCell"/>
</dbReference>
<dbReference type="GO" id="GO:0016151">
    <property type="term" value="F:nickel cation binding"/>
    <property type="evidence" value="ECO:0007669"/>
    <property type="project" value="UniProtKB-UniRule"/>
</dbReference>
<dbReference type="GO" id="GO:0051082">
    <property type="term" value="F:unfolded protein binding"/>
    <property type="evidence" value="ECO:0007669"/>
    <property type="project" value="UniProtKB-UniRule"/>
</dbReference>
<dbReference type="GO" id="GO:0006457">
    <property type="term" value="P:protein folding"/>
    <property type="evidence" value="ECO:0007669"/>
    <property type="project" value="InterPro"/>
</dbReference>
<dbReference type="GO" id="GO:0065003">
    <property type="term" value="P:protein-containing complex assembly"/>
    <property type="evidence" value="ECO:0007669"/>
    <property type="project" value="InterPro"/>
</dbReference>
<dbReference type="GO" id="GO:0019627">
    <property type="term" value="P:urea metabolic process"/>
    <property type="evidence" value="ECO:0007669"/>
    <property type="project" value="InterPro"/>
</dbReference>
<dbReference type="CDD" id="cd00571">
    <property type="entry name" value="UreE"/>
    <property type="match status" value="1"/>
</dbReference>
<dbReference type="Gene3D" id="2.60.260.20">
    <property type="entry name" value="Urease metallochaperone UreE, N-terminal domain"/>
    <property type="match status" value="1"/>
</dbReference>
<dbReference type="Gene3D" id="3.30.70.790">
    <property type="entry name" value="UreE, C-terminal domain"/>
    <property type="match status" value="1"/>
</dbReference>
<dbReference type="HAMAP" id="MF_00822">
    <property type="entry name" value="UreE"/>
    <property type="match status" value="1"/>
</dbReference>
<dbReference type="InterPro" id="IPR012406">
    <property type="entry name" value="UreE"/>
</dbReference>
<dbReference type="InterPro" id="IPR007864">
    <property type="entry name" value="UreE_C_dom"/>
</dbReference>
<dbReference type="InterPro" id="IPR004029">
    <property type="entry name" value="UreE_N"/>
</dbReference>
<dbReference type="InterPro" id="IPR036118">
    <property type="entry name" value="UreE_N_sf"/>
</dbReference>
<dbReference type="NCBIfam" id="NF009759">
    <property type="entry name" value="PRK13261.2-5"/>
    <property type="match status" value="1"/>
</dbReference>
<dbReference type="Pfam" id="PF05194">
    <property type="entry name" value="UreE_C"/>
    <property type="match status" value="1"/>
</dbReference>
<dbReference type="Pfam" id="PF02814">
    <property type="entry name" value="UreE_N"/>
    <property type="match status" value="1"/>
</dbReference>
<dbReference type="PIRSF" id="PIRSF036402">
    <property type="entry name" value="Ureas_acces_UreE"/>
    <property type="match status" value="1"/>
</dbReference>
<dbReference type="SMART" id="SM00988">
    <property type="entry name" value="UreE_N"/>
    <property type="match status" value="1"/>
</dbReference>
<dbReference type="SUPFAM" id="SSF69737">
    <property type="entry name" value="Urease metallochaperone UreE, C-terminal domain"/>
    <property type="match status" value="1"/>
</dbReference>
<dbReference type="SUPFAM" id="SSF69287">
    <property type="entry name" value="Urease metallochaperone UreE, N-terminal domain"/>
    <property type="match status" value="1"/>
</dbReference>